<keyword id="KW-0028">Amino-acid biosynthesis</keyword>
<keyword id="KW-0170">Cobalt</keyword>
<keyword id="KW-0220">Diaminopimelate biosynthesis</keyword>
<keyword id="KW-0378">Hydrolase</keyword>
<keyword id="KW-0457">Lysine biosynthesis</keyword>
<keyword id="KW-0479">Metal-binding</keyword>
<keyword id="KW-1185">Reference proteome</keyword>
<keyword id="KW-0862">Zinc</keyword>
<protein>
    <recommendedName>
        <fullName evidence="1">Succinyl-diaminopimelate desuccinylase</fullName>
        <shortName evidence="1">SDAP desuccinylase</shortName>
        <ecNumber evidence="1">3.5.1.18</ecNumber>
    </recommendedName>
    <alternativeName>
        <fullName evidence="1">N-succinyl-LL-2,6-diaminoheptanedioate amidohydrolase</fullName>
    </alternativeName>
</protein>
<reference key="1">
    <citation type="journal article" date="2004" name="Science">
        <title>The genomic sequence of the accidental pathogen Legionella pneumophila.</title>
        <authorList>
            <person name="Chien M."/>
            <person name="Morozova I."/>
            <person name="Shi S."/>
            <person name="Sheng H."/>
            <person name="Chen J."/>
            <person name="Gomez S.M."/>
            <person name="Asamani G."/>
            <person name="Hill K."/>
            <person name="Nuara J."/>
            <person name="Feder M."/>
            <person name="Rineer J."/>
            <person name="Greenberg J.J."/>
            <person name="Steshenko V."/>
            <person name="Park S.H."/>
            <person name="Zhao B."/>
            <person name="Teplitskaya E."/>
            <person name="Edwards J.R."/>
            <person name="Pampou S."/>
            <person name="Georghiou A."/>
            <person name="Chou I.-C."/>
            <person name="Iannuccilli W."/>
            <person name="Ulz M.E."/>
            <person name="Kim D.H."/>
            <person name="Geringer-Sameth A."/>
            <person name="Goldsberry C."/>
            <person name="Morozov P."/>
            <person name="Fischer S.G."/>
            <person name="Segal G."/>
            <person name="Qu X."/>
            <person name="Rzhetsky A."/>
            <person name="Zhang P."/>
            <person name="Cayanis E."/>
            <person name="De Jong P.J."/>
            <person name="Ju J."/>
            <person name="Kalachikov S."/>
            <person name="Shuman H.A."/>
            <person name="Russo J.J."/>
        </authorList>
    </citation>
    <scope>NUCLEOTIDE SEQUENCE [LARGE SCALE GENOMIC DNA]</scope>
    <source>
        <strain>Philadelphia 1 / ATCC 33152 / DSM 7513</strain>
    </source>
</reference>
<feature type="chain" id="PRO_0000375601" description="Succinyl-diaminopimelate desuccinylase">
    <location>
        <begin position="1"/>
        <end position="377"/>
    </location>
</feature>
<feature type="active site" evidence="1">
    <location>
        <position position="68"/>
    </location>
</feature>
<feature type="active site" description="Proton acceptor" evidence="1">
    <location>
        <position position="133"/>
    </location>
</feature>
<feature type="binding site" evidence="1">
    <location>
        <position position="66"/>
    </location>
    <ligand>
        <name>Zn(2+)</name>
        <dbReference type="ChEBI" id="CHEBI:29105"/>
        <label>1</label>
    </ligand>
</feature>
<feature type="binding site" evidence="1">
    <location>
        <position position="99"/>
    </location>
    <ligand>
        <name>Zn(2+)</name>
        <dbReference type="ChEBI" id="CHEBI:29105"/>
        <label>1</label>
    </ligand>
</feature>
<feature type="binding site" evidence="1">
    <location>
        <position position="99"/>
    </location>
    <ligand>
        <name>Zn(2+)</name>
        <dbReference type="ChEBI" id="CHEBI:29105"/>
        <label>2</label>
    </ligand>
</feature>
<feature type="binding site" evidence="1">
    <location>
        <position position="134"/>
    </location>
    <ligand>
        <name>Zn(2+)</name>
        <dbReference type="ChEBI" id="CHEBI:29105"/>
        <label>2</label>
    </ligand>
</feature>
<feature type="binding site" evidence="1">
    <location>
        <position position="163"/>
    </location>
    <ligand>
        <name>Zn(2+)</name>
        <dbReference type="ChEBI" id="CHEBI:29105"/>
        <label>1</label>
    </ligand>
</feature>
<feature type="binding site" evidence="1">
    <location>
        <position position="349"/>
    </location>
    <ligand>
        <name>Zn(2+)</name>
        <dbReference type="ChEBI" id="CHEBI:29105"/>
        <label>2</label>
    </ligand>
</feature>
<name>DAPE_LEGPH</name>
<evidence type="ECO:0000255" key="1">
    <source>
        <dbReference type="HAMAP-Rule" id="MF_01690"/>
    </source>
</evidence>
<gene>
    <name evidence="1" type="primary">dapE</name>
    <name type="ordered locus">lpg0887</name>
</gene>
<comment type="function">
    <text evidence="1">Catalyzes the hydrolysis of N-succinyl-L,L-diaminopimelic acid (SDAP), forming succinate and LL-2,6-diaminopimelate (DAP), an intermediate involved in the bacterial biosynthesis of lysine and meso-diaminopimelic acid, an essential component of bacterial cell walls.</text>
</comment>
<comment type="catalytic activity">
    <reaction evidence="1">
        <text>N-succinyl-(2S,6S)-2,6-diaminopimelate + H2O = (2S,6S)-2,6-diaminopimelate + succinate</text>
        <dbReference type="Rhea" id="RHEA:22608"/>
        <dbReference type="ChEBI" id="CHEBI:15377"/>
        <dbReference type="ChEBI" id="CHEBI:30031"/>
        <dbReference type="ChEBI" id="CHEBI:57609"/>
        <dbReference type="ChEBI" id="CHEBI:58087"/>
        <dbReference type="EC" id="3.5.1.18"/>
    </reaction>
</comment>
<comment type="cofactor">
    <cofactor evidence="1">
        <name>Zn(2+)</name>
        <dbReference type="ChEBI" id="CHEBI:29105"/>
    </cofactor>
    <cofactor evidence="1">
        <name>Co(2+)</name>
        <dbReference type="ChEBI" id="CHEBI:48828"/>
    </cofactor>
    <text evidence="1">Binds 2 Zn(2+) or Co(2+) ions per subunit.</text>
</comment>
<comment type="pathway">
    <text evidence="1">Amino-acid biosynthesis; L-lysine biosynthesis via DAP pathway; LL-2,6-diaminopimelate from (S)-tetrahydrodipicolinate (succinylase route): step 3/3.</text>
</comment>
<comment type="subunit">
    <text evidence="1">Homodimer.</text>
</comment>
<comment type="similarity">
    <text evidence="1">Belongs to the peptidase M20A family. DapE subfamily.</text>
</comment>
<dbReference type="EC" id="3.5.1.18" evidence="1"/>
<dbReference type="EMBL" id="AE017354">
    <property type="protein sequence ID" value="AAU26974.1"/>
    <property type="molecule type" value="Genomic_DNA"/>
</dbReference>
<dbReference type="RefSeq" id="WP_010946622.1">
    <property type="nucleotide sequence ID" value="NC_002942.5"/>
</dbReference>
<dbReference type="RefSeq" id="YP_094921.1">
    <property type="nucleotide sequence ID" value="NC_002942.5"/>
</dbReference>
<dbReference type="SMR" id="Q5ZX46"/>
<dbReference type="STRING" id="272624.lpg0887"/>
<dbReference type="PaxDb" id="272624-lpg0887"/>
<dbReference type="GeneID" id="57034875"/>
<dbReference type="KEGG" id="lpn:lpg0887"/>
<dbReference type="PATRIC" id="fig|272624.6.peg.918"/>
<dbReference type="eggNOG" id="COG0624">
    <property type="taxonomic scope" value="Bacteria"/>
</dbReference>
<dbReference type="HOGENOM" id="CLU_021802_4_0_6"/>
<dbReference type="OrthoDB" id="9809784at2"/>
<dbReference type="UniPathway" id="UPA00034">
    <property type="reaction ID" value="UER00021"/>
</dbReference>
<dbReference type="Proteomes" id="UP000000609">
    <property type="component" value="Chromosome"/>
</dbReference>
<dbReference type="GO" id="GO:0008777">
    <property type="term" value="F:acetylornithine deacetylase activity"/>
    <property type="evidence" value="ECO:0007669"/>
    <property type="project" value="TreeGrafter"/>
</dbReference>
<dbReference type="GO" id="GO:0050897">
    <property type="term" value="F:cobalt ion binding"/>
    <property type="evidence" value="ECO:0007669"/>
    <property type="project" value="UniProtKB-UniRule"/>
</dbReference>
<dbReference type="GO" id="GO:0009014">
    <property type="term" value="F:succinyl-diaminopimelate desuccinylase activity"/>
    <property type="evidence" value="ECO:0007669"/>
    <property type="project" value="UniProtKB-UniRule"/>
</dbReference>
<dbReference type="GO" id="GO:0008270">
    <property type="term" value="F:zinc ion binding"/>
    <property type="evidence" value="ECO:0007669"/>
    <property type="project" value="UniProtKB-UniRule"/>
</dbReference>
<dbReference type="GO" id="GO:0019877">
    <property type="term" value="P:diaminopimelate biosynthetic process"/>
    <property type="evidence" value="ECO:0007669"/>
    <property type="project" value="UniProtKB-UniRule"/>
</dbReference>
<dbReference type="GO" id="GO:0006526">
    <property type="term" value="P:L-arginine biosynthetic process"/>
    <property type="evidence" value="ECO:0007669"/>
    <property type="project" value="TreeGrafter"/>
</dbReference>
<dbReference type="GO" id="GO:0009089">
    <property type="term" value="P:lysine biosynthetic process via diaminopimelate"/>
    <property type="evidence" value="ECO:0007669"/>
    <property type="project" value="UniProtKB-UniRule"/>
</dbReference>
<dbReference type="CDD" id="cd03891">
    <property type="entry name" value="M20_DapE_proteobac"/>
    <property type="match status" value="1"/>
</dbReference>
<dbReference type="Gene3D" id="3.40.630.10">
    <property type="entry name" value="Zn peptidases"/>
    <property type="match status" value="2"/>
</dbReference>
<dbReference type="HAMAP" id="MF_01690">
    <property type="entry name" value="DapE"/>
    <property type="match status" value="1"/>
</dbReference>
<dbReference type="InterPro" id="IPR036264">
    <property type="entry name" value="Bact_exopeptidase_dim_dom"/>
</dbReference>
<dbReference type="InterPro" id="IPR005941">
    <property type="entry name" value="DapE_proteobac"/>
</dbReference>
<dbReference type="InterPro" id="IPR002933">
    <property type="entry name" value="Peptidase_M20"/>
</dbReference>
<dbReference type="InterPro" id="IPR011650">
    <property type="entry name" value="Peptidase_M20_dimer"/>
</dbReference>
<dbReference type="InterPro" id="IPR050072">
    <property type="entry name" value="Peptidase_M20A"/>
</dbReference>
<dbReference type="NCBIfam" id="TIGR01246">
    <property type="entry name" value="dapE_proteo"/>
    <property type="match status" value="1"/>
</dbReference>
<dbReference type="NCBIfam" id="NF009557">
    <property type="entry name" value="PRK13009.1"/>
    <property type="match status" value="1"/>
</dbReference>
<dbReference type="PANTHER" id="PTHR43808">
    <property type="entry name" value="ACETYLORNITHINE DEACETYLASE"/>
    <property type="match status" value="1"/>
</dbReference>
<dbReference type="PANTHER" id="PTHR43808:SF31">
    <property type="entry name" value="N-ACETYL-L-CITRULLINE DEACETYLASE"/>
    <property type="match status" value="1"/>
</dbReference>
<dbReference type="Pfam" id="PF07687">
    <property type="entry name" value="M20_dimer"/>
    <property type="match status" value="1"/>
</dbReference>
<dbReference type="Pfam" id="PF01546">
    <property type="entry name" value="Peptidase_M20"/>
    <property type="match status" value="1"/>
</dbReference>
<dbReference type="SUPFAM" id="SSF55031">
    <property type="entry name" value="Bacterial exopeptidase dimerisation domain"/>
    <property type="match status" value="1"/>
</dbReference>
<dbReference type="SUPFAM" id="SSF53187">
    <property type="entry name" value="Zn-dependent exopeptidases"/>
    <property type="match status" value="1"/>
</dbReference>
<organism>
    <name type="scientific">Legionella pneumophila subsp. pneumophila (strain Philadelphia 1 / ATCC 33152 / DSM 7513)</name>
    <dbReference type="NCBI Taxonomy" id="272624"/>
    <lineage>
        <taxon>Bacteria</taxon>
        <taxon>Pseudomonadati</taxon>
        <taxon>Pseudomonadota</taxon>
        <taxon>Gammaproteobacteria</taxon>
        <taxon>Legionellales</taxon>
        <taxon>Legionellaceae</taxon>
        <taxon>Legionella</taxon>
    </lineage>
</organism>
<accession>Q5ZX46</accession>
<proteinExistence type="inferred from homology"/>
<sequence length="377" mass="41482">MTDIKQILTDLIGFPSITPEDAGCQKYMIQFLEQLGFTCQQLNNGPVSNFFACYGKIGPLLVFAGHTDVVPVGEVSKWDTDPFSLEEKSGVLYGRGVADMKGSLACMLHMARRFIKTYPSFPGRLGFLITSGEEGDEFNLGTPYVMQKLEQQGIVIDYCIVGEPSSSLKAGDVIKIGRRGSLSAKIHLSGKQGHVAYPHLADNPIHRISPVLAELTSMQWDNGNAFFPPTSMQITYIHCGGHAGNIIPGELNLHLNFRYSTEQTDESLKTRVINAFTHHNLNPAIEWRLNGEPFLTNKGILLESCKQTVLEHIGTLPELSTSGGTSDGRFIAPYGVEVIELGLVNATIHQVNECTSLQDLNTLETMYFSICEKLLID</sequence>